<comment type="subcellular location">
    <subcellularLocation>
        <location evidence="1">Cytoplasm</location>
    </subcellularLocation>
    <subcellularLocation>
        <location evidence="1">Nucleus</location>
    </subcellularLocation>
</comment>
<comment type="similarity">
    <text evidence="2">Belongs to the hid-1 family.</text>
</comment>
<accession>Q9P7M6</accession>
<evidence type="ECO:0000269" key="1">
    <source>
    </source>
</evidence>
<evidence type="ECO:0000305" key="2"/>
<evidence type="ECO:0000312" key="3">
    <source>
        <dbReference type="EMBL" id="CAB76033.1"/>
    </source>
</evidence>
<gene>
    <name type="ORF">SPAP27G11.12</name>
</gene>
<organism>
    <name type="scientific">Schizosaccharomyces pombe (strain 972 / ATCC 24843)</name>
    <name type="common">Fission yeast</name>
    <dbReference type="NCBI Taxonomy" id="284812"/>
    <lineage>
        <taxon>Eukaryota</taxon>
        <taxon>Fungi</taxon>
        <taxon>Dikarya</taxon>
        <taxon>Ascomycota</taxon>
        <taxon>Taphrinomycotina</taxon>
        <taxon>Schizosaccharomycetes</taxon>
        <taxon>Schizosaccharomycetales</taxon>
        <taxon>Schizosaccharomycetaceae</taxon>
        <taxon>Schizosaccharomyces</taxon>
    </lineage>
</organism>
<name>YIOC_SCHPO</name>
<feature type="chain" id="PRO_0000353194" description="Hid-1 family protein P27G11.12">
    <location>
        <begin position="1"/>
        <end position="797"/>
    </location>
</feature>
<reference evidence="3" key="1">
    <citation type="journal article" date="2002" name="Nature">
        <title>The genome sequence of Schizosaccharomyces pombe.</title>
        <authorList>
            <person name="Wood V."/>
            <person name="Gwilliam R."/>
            <person name="Rajandream M.A."/>
            <person name="Lyne M.H."/>
            <person name="Lyne R."/>
            <person name="Stewart A."/>
            <person name="Sgouros J.G."/>
            <person name="Peat N."/>
            <person name="Hayles J."/>
            <person name="Baker S.G."/>
            <person name="Basham D."/>
            <person name="Bowman S."/>
            <person name="Brooks K."/>
            <person name="Brown D."/>
            <person name="Brown S."/>
            <person name="Chillingworth T."/>
            <person name="Churcher C.M."/>
            <person name="Collins M."/>
            <person name="Connor R."/>
            <person name="Cronin A."/>
            <person name="Davis P."/>
            <person name="Feltwell T."/>
            <person name="Fraser A."/>
            <person name="Gentles S."/>
            <person name="Goble A."/>
            <person name="Hamlin N."/>
            <person name="Harris D.E."/>
            <person name="Hidalgo J."/>
            <person name="Hodgson G."/>
            <person name="Holroyd S."/>
            <person name="Hornsby T."/>
            <person name="Howarth S."/>
            <person name="Huckle E.J."/>
            <person name="Hunt S."/>
            <person name="Jagels K."/>
            <person name="James K.D."/>
            <person name="Jones L."/>
            <person name="Jones M."/>
            <person name="Leather S."/>
            <person name="McDonald S."/>
            <person name="McLean J."/>
            <person name="Mooney P."/>
            <person name="Moule S."/>
            <person name="Mungall K.L."/>
            <person name="Murphy L.D."/>
            <person name="Niblett D."/>
            <person name="Odell C."/>
            <person name="Oliver K."/>
            <person name="O'Neil S."/>
            <person name="Pearson D."/>
            <person name="Quail M.A."/>
            <person name="Rabbinowitsch E."/>
            <person name="Rutherford K.M."/>
            <person name="Rutter S."/>
            <person name="Saunders D."/>
            <person name="Seeger K."/>
            <person name="Sharp S."/>
            <person name="Skelton J."/>
            <person name="Simmonds M.N."/>
            <person name="Squares R."/>
            <person name="Squares S."/>
            <person name="Stevens K."/>
            <person name="Taylor K."/>
            <person name="Taylor R.G."/>
            <person name="Tivey A."/>
            <person name="Walsh S.V."/>
            <person name="Warren T."/>
            <person name="Whitehead S."/>
            <person name="Woodward J.R."/>
            <person name="Volckaert G."/>
            <person name="Aert R."/>
            <person name="Robben J."/>
            <person name="Grymonprez B."/>
            <person name="Weltjens I."/>
            <person name="Vanstreels E."/>
            <person name="Rieger M."/>
            <person name="Schaefer M."/>
            <person name="Mueller-Auer S."/>
            <person name="Gabel C."/>
            <person name="Fuchs M."/>
            <person name="Duesterhoeft A."/>
            <person name="Fritzc C."/>
            <person name="Holzer E."/>
            <person name="Moestl D."/>
            <person name="Hilbert H."/>
            <person name="Borzym K."/>
            <person name="Langer I."/>
            <person name="Beck A."/>
            <person name="Lehrach H."/>
            <person name="Reinhardt R."/>
            <person name="Pohl T.M."/>
            <person name="Eger P."/>
            <person name="Zimmermann W."/>
            <person name="Wedler H."/>
            <person name="Wambutt R."/>
            <person name="Purnelle B."/>
            <person name="Goffeau A."/>
            <person name="Cadieu E."/>
            <person name="Dreano S."/>
            <person name="Gloux S."/>
            <person name="Lelaure V."/>
            <person name="Mottier S."/>
            <person name="Galibert F."/>
            <person name="Aves S.J."/>
            <person name="Xiang Z."/>
            <person name="Hunt C."/>
            <person name="Moore K."/>
            <person name="Hurst S.M."/>
            <person name="Lucas M."/>
            <person name="Rochet M."/>
            <person name="Gaillardin C."/>
            <person name="Tallada V.A."/>
            <person name="Garzon A."/>
            <person name="Thode G."/>
            <person name="Daga R.R."/>
            <person name="Cruzado L."/>
            <person name="Jimenez J."/>
            <person name="Sanchez M."/>
            <person name="del Rey F."/>
            <person name="Benito J."/>
            <person name="Dominguez A."/>
            <person name="Revuelta J.L."/>
            <person name="Moreno S."/>
            <person name="Armstrong J."/>
            <person name="Forsburg S.L."/>
            <person name="Cerutti L."/>
            <person name="Lowe T."/>
            <person name="McCombie W.R."/>
            <person name="Paulsen I."/>
            <person name="Potashkin J."/>
            <person name="Shpakovski G.V."/>
            <person name="Ussery D."/>
            <person name="Barrell B.G."/>
            <person name="Nurse P."/>
        </authorList>
    </citation>
    <scope>NUCLEOTIDE SEQUENCE [LARGE SCALE GENOMIC DNA]</scope>
    <source>
        <strain>972 / ATCC 24843</strain>
    </source>
</reference>
<reference evidence="2" key="2">
    <citation type="journal article" date="2006" name="Nat. Biotechnol.">
        <title>ORFeome cloning and global analysis of protein localization in the fission yeast Schizosaccharomyces pombe.</title>
        <authorList>
            <person name="Matsuyama A."/>
            <person name="Arai R."/>
            <person name="Yashiroda Y."/>
            <person name="Shirai A."/>
            <person name="Kamata A."/>
            <person name="Sekido S."/>
            <person name="Kobayashi Y."/>
            <person name="Hashimoto A."/>
            <person name="Hamamoto M."/>
            <person name="Hiraoka Y."/>
            <person name="Horinouchi S."/>
            <person name="Yoshida M."/>
        </authorList>
    </citation>
    <scope>SUBCELLULAR LOCATION [LARGE SCALE ANALYSIS]</scope>
</reference>
<protein>
    <recommendedName>
        <fullName>Hid-1 family protein P27G11.12</fullName>
    </recommendedName>
    <alternativeName>
        <fullName evidence="3">Down-regulated in multiple cancers 1 homolog 1</fullName>
    </alternativeName>
</protein>
<sequence>MGSQQSKLDFRNAVLRLHEERNIPKFDLIWERLWTLPETTEDVFHLMSIDDLTKVKDNAPENLQTIIAVLWDKLEDLQKETLFDDPAAPTTKCALNCMRLLTRLMPIIFEDKSMLEWFDYFAWTVPKDPNINTPRGASFLNTVVDYLFLINFTIPAHNDLTHGVHYCIWETGVVYHPTMLKERSYELHRVEVLRLLLSLFSEEIYRTDGNGSSCCAYVASIANRRLVLCLLSSLINTAMRFNTMFWKPEFLPLDNSVAHMSLIEYCFSVLLILMSEENNNGTPCYNNYRSSKNTLPKNYFSILLSKLQPYSDFQIILDGMSRLLYPPMQSTIPKRSSLIMFDYYPLVLIFCKLFIHYNERFFHYLIDTDRAIDLFIFLLYLSFEYLGDPSTYNHLKLCVILLKRLTAEKYFCKRLNKPFQQQTALPISMPVPFEGGTYADFTIIAISLLVQYTKDYHSEIAQMLCCSLCYLCLYAQNLNSHSSQSLFELFQSASYPGFLISNDVNHKILKYVIGAINNAIQYAQKYNAPLLYFFSMHKDYIEAVSALSFDAIMSVRNSSAEGDSAYWTRNGKTFSSKAFDSILLSRLRYVRSKSPTPYYPIESSEFGFTNLKDVTSKDEITDGFDKALRSNSLRTHRDSRPVQPLLKQRPQLHRALTESATLHGNDRSLEDTDEAKVEPIAHSVDYTFKPTVEWWNKWWPSLNFRTMLDIFTDLSLKISDMKKAGHPASEIMAMIKTQKYPATNQPYIPKYRTKEWRQQLANFARLFAWQVSCDLDSHKREGPGIFEGTDVKIFDSF</sequence>
<keyword id="KW-0963">Cytoplasm</keyword>
<keyword id="KW-0539">Nucleus</keyword>
<keyword id="KW-1185">Reference proteome</keyword>
<dbReference type="EMBL" id="CU329670">
    <property type="protein sequence ID" value="CAB76033.1"/>
    <property type="molecule type" value="Genomic_DNA"/>
</dbReference>
<dbReference type="RefSeq" id="NP_593417.1">
    <property type="nucleotide sequence ID" value="NM_001018850.2"/>
</dbReference>
<dbReference type="BioGRID" id="278039">
    <property type="interactions" value="6"/>
</dbReference>
<dbReference type="FunCoup" id="Q9P7M6">
    <property type="interactions" value="9"/>
</dbReference>
<dbReference type="iPTMnet" id="Q9P7M6"/>
<dbReference type="PaxDb" id="4896-SPAP27G11.12.1"/>
<dbReference type="EnsemblFungi" id="SPAP27G11.12.1">
    <property type="protein sequence ID" value="SPAP27G11.12.1:pep"/>
    <property type="gene ID" value="SPAP27G11.12"/>
</dbReference>
<dbReference type="KEGG" id="spo:2541539"/>
<dbReference type="PomBase" id="SPAP27G11.12"/>
<dbReference type="VEuPathDB" id="FungiDB:SPAP27G11.12"/>
<dbReference type="eggNOG" id="KOG2226">
    <property type="taxonomic scope" value="Eukaryota"/>
</dbReference>
<dbReference type="HOGENOM" id="CLU_007392_0_0_1"/>
<dbReference type="InParanoid" id="Q9P7M6"/>
<dbReference type="OMA" id="VCPRPVC"/>
<dbReference type="PhylomeDB" id="Q9P7M6"/>
<dbReference type="PRO" id="PR:Q9P7M6"/>
<dbReference type="Proteomes" id="UP000002485">
    <property type="component" value="Chromosome I"/>
</dbReference>
<dbReference type="GO" id="GO:0005737">
    <property type="term" value="C:cytoplasm"/>
    <property type="evidence" value="ECO:0007005"/>
    <property type="project" value="PomBase"/>
</dbReference>
<dbReference type="GO" id="GO:0005829">
    <property type="term" value="C:cytosol"/>
    <property type="evidence" value="ECO:0007005"/>
    <property type="project" value="PomBase"/>
</dbReference>
<dbReference type="GO" id="GO:0005797">
    <property type="term" value="C:Golgi medial cisterna"/>
    <property type="evidence" value="ECO:0000318"/>
    <property type="project" value="GO_Central"/>
</dbReference>
<dbReference type="GO" id="GO:0000138">
    <property type="term" value="C:Golgi trans cisterna"/>
    <property type="evidence" value="ECO:0000318"/>
    <property type="project" value="GO_Central"/>
</dbReference>
<dbReference type="GO" id="GO:0016020">
    <property type="term" value="C:membrane"/>
    <property type="evidence" value="ECO:0000318"/>
    <property type="project" value="GO_Central"/>
</dbReference>
<dbReference type="GO" id="GO:0005634">
    <property type="term" value="C:nucleus"/>
    <property type="evidence" value="ECO:0007005"/>
    <property type="project" value="PomBase"/>
</dbReference>
<dbReference type="InterPro" id="IPR026705">
    <property type="entry name" value="Hid-1/Ecm30"/>
</dbReference>
<dbReference type="PANTHER" id="PTHR21575">
    <property type="entry name" value="PROTEIN HID1"/>
    <property type="match status" value="1"/>
</dbReference>
<dbReference type="PANTHER" id="PTHR21575:SF12">
    <property type="entry name" value="PROTEIN HID1"/>
    <property type="match status" value="1"/>
</dbReference>
<dbReference type="Pfam" id="PF12722">
    <property type="entry name" value="Hid1"/>
    <property type="match status" value="1"/>
</dbReference>
<proteinExistence type="inferred from homology"/>